<sequence length="494" mass="56856">MLNSRDQGNLHSGLCLWLCGFLALFKGSTGCESEEQLFHRLFAHYNRFIRPVENVSDPVTVHFELAITQLANVDEVNQIMETNLWLRHIWKDYRLRWDPTEYDGIETLRVPADNIWKPDIVLYNNAVGDFQVEGKTKALLKYDGVITWTPPAIFKSSCPMDITFFPFDHQNCSLKFGSWTYDKAEIDLLIIGSKVDMNDFWENSEWEIVDASGYKHDIKYNCCEEIYTDITYSFYIRRLPMFYTINLIIPCLFISFLTVLVFYLPSDCGEKVTLCISVLLSLTVFLLVITETIPSTSLVIPLVGEYLLFTMIFVTLSIVVTVFVLNIHYRTPATHTMPKWVKTIFLQAFPSILMMRKPLDKTKEAGGVKDPKSHTKRPAKVKFTHRGESKLLKECHHCQKSSDIAPGKRRSSQQPARWVAENSEHSSDVEDVIESVQFIAENMKSHNETNEVEDDWKYMAMVVDRVFLWVFIIVCVFGTVGLFLQPLLGNTGKS</sequence>
<gene>
    <name type="primary">Chrna6</name>
    <name type="synonym">Nica6</name>
</gene>
<name>ACHA6_MOUSE</name>
<accession>Q9R0W9</accession>
<accession>Q3UEY4</accession>
<accession>Q8K0A7</accession>
<organism>
    <name type="scientific">Mus musculus</name>
    <name type="common">Mouse</name>
    <dbReference type="NCBI Taxonomy" id="10090"/>
    <lineage>
        <taxon>Eukaryota</taxon>
        <taxon>Metazoa</taxon>
        <taxon>Chordata</taxon>
        <taxon>Craniata</taxon>
        <taxon>Vertebrata</taxon>
        <taxon>Euteleostomi</taxon>
        <taxon>Mammalia</taxon>
        <taxon>Eutheria</taxon>
        <taxon>Euarchontoglires</taxon>
        <taxon>Glires</taxon>
        <taxon>Rodentia</taxon>
        <taxon>Myomorpha</taxon>
        <taxon>Muroidea</taxon>
        <taxon>Muridae</taxon>
        <taxon>Murinae</taxon>
        <taxon>Mus</taxon>
        <taxon>Mus</taxon>
    </lineage>
</organism>
<reference key="1">
    <citation type="submission" date="1999-08" db="EMBL/GenBank/DDBJ databases">
        <authorList>
            <person name="Marubio L.M."/>
            <person name="Champtiaux N."/>
            <person name="Changeux J.-P."/>
        </authorList>
    </citation>
    <scope>NUCLEOTIDE SEQUENCE [MRNA]</scope>
</reference>
<reference key="2">
    <citation type="journal article" date="2005" name="Science">
        <title>The transcriptional landscape of the mammalian genome.</title>
        <authorList>
            <person name="Carninci P."/>
            <person name="Kasukawa T."/>
            <person name="Katayama S."/>
            <person name="Gough J."/>
            <person name="Frith M.C."/>
            <person name="Maeda N."/>
            <person name="Oyama R."/>
            <person name="Ravasi T."/>
            <person name="Lenhard B."/>
            <person name="Wells C."/>
            <person name="Kodzius R."/>
            <person name="Shimokawa K."/>
            <person name="Bajic V.B."/>
            <person name="Brenner S.E."/>
            <person name="Batalov S."/>
            <person name="Forrest A.R."/>
            <person name="Zavolan M."/>
            <person name="Davis M.J."/>
            <person name="Wilming L.G."/>
            <person name="Aidinis V."/>
            <person name="Allen J.E."/>
            <person name="Ambesi-Impiombato A."/>
            <person name="Apweiler R."/>
            <person name="Aturaliya R.N."/>
            <person name="Bailey T.L."/>
            <person name="Bansal M."/>
            <person name="Baxter L."/>
            <person name="Beisel K.W."/>
            <person name="Bersano T."/>
            <person name="Bono H."/>
            <person name="Chalk A.M."/>
            <person name="Chiu K.P."/>
            <person name="Choudhary V."/>
            <person name="Christoffels A."/>
            <person name="Clutterbuck D.R."/>
            <person name="Crowe M.L."/>
            <person name="Dalla E."/>
            <person name="Dalrymple B.P."/>
            <person name="de Bono B."/>
            <person name="Della Gatta G."/>
            <person name="di Bernardo D."/>
            <person name="Down T."/>
            <person name="Engstrom P."/>
            <person name="Fagiolini M."/>
            <person name="Faulkner G."/>
            <person name="Fletcher C.F."/>
            <person name="Fukushima T."/>
            <person name="Furuno M."/>
            <person name="Futaki S."/>
            <person name="Gariboldi M."/>
            <person name="Georgii-Hemming P."/>
            <person name="Gingeras T.R."/>
            <person name="Gojobori T."/>
            <person name="Green R.E."/>
            <person name="Gustincich S."/>
            <person name="Harbers M."/>
            <person name="Hayashi Y."/>
            <person name="Hensch T.K."/>
            <person name="Hirokawa N."/>
            <person name="Hill D."/>
            <person name="Huminiecki L."/>
            <person name="Iacono M."/>
            <person name="Ikeo K."/>
            <person name="Iwama A."/>
            <person name="Ishikawa T."/>
            <person name="Jakt M."/>
            <person name="Kanapin A."/>
            <person name="Katoh M."/>
            <person name="Kawasawa Y."/>
            <person name="Kelso J."/>
            <person name="Kitamura H."/>
            <person name="Kitano H."/>
            <person name="Kollias G."/>
            <person name="Krishnan S.P."/>
            <person name="Kruger A."/>
            <person name="Kummerfeld S.K."/>
            <person name="Kurochkin I.V."/>
            <person name="Lareau L.F."/>
            <person name="Lazarevic D."/>
            <person name="Lipovich L."/>
            <person name="Liu J."/>
            <person name="Liuni S."/>
            <person name="McWilliam S."/>
            <person name="Madan Babu M."/>
            <person name="Madera M."/>
            <person name="Marchionni L."/>
            <person name="Matsuda H."/>
            <person name="Matsuzawa S."/>
            <person name="Miki H."/>
            <person name="Mignone F."/>
            <person name="Miyake S."/>
            <person name="Morris K."/>
            <person name="Mottagui-Tabar S."/>
            <person name="Mulder N."/>
            <person name="Nakano N."/>
            <person name="Nakauchi H."/>
            <person name="Ng P."/>
            <person name="Nilsson R."/>
            <person name="Nishiguchi S."/>
            <person name="Nishikawa S."/>
            <person name="Nori F."/>
            <person name="Ohara O."/>
            <person name="Okazaki Y."/>
            <person name="Orlando V."/>
            <person name="Pang K.C."/>
            <person name="Pavan W.J."/>
            <person name="Pavesi G."/>
            <person name="Pesole G."/>
            <person name="Petrovsky N."/>
            <person name="Piazza S."/>
            <person name="Reed J."/>
            <person name="Reid J.F."/>
            <person name="Ring B.Z."/>
            <person name="Ringwald M."/>
            <person name="Rost B."/>
            <person name="Ruan Y."/>
            <person name="Salzberg S.L."/>
            <person name="Sandelin A."/>
            <person name="Schneider C."/>
            <person name="Schoenbach C."/>
            <person name="Sekiguchi K."/>
            <person name="Semple C.A."/>
            <person name="Seno S."/>
            <person name="Sessa L."/>
            <person name="Sheng Y."/>
            <person name="Shibata Y."/>
            <person name="Shimada H."/>
            <person name="Shimada K."/>
            <person name="Silva D."/>
            <person name="Sinclair B."/>
            <person name="Sperling S."/>
            <person name="Stupka E."/>
            <person name="Sugiura K."/>
            <person name="Sultana R."/>
            <person name="Takenaka Y."/>
            <person name="Taki K."/>
            <person name="Tammoja K."/>
            <person name="Tan S.L."/>
            <person name="Tang S."/>
            <person name="Taylor M.S."/>
            <person name="Tegner J."/>
            <person name="Teichmann S.A."/>
            <person name="Ueda H.R."/>
            <person name="van Nimwegen E."/>
            <person name="Verardo R."/>
            <person name="Wei C.L."/>
            <person name="Yagi K."/>
            <person name="Yamanishi H."/>
            <person name="Zabarovsky E."/>
            <person name="Zhu S."/>
            <person name="Zimmer A."/>
            <person name="Hide W."/>
            <person name="Bult C."/>
            <person name="Grimmond S.M."/>
            <person name="Teasdale R.D."/>
            <person name="Liu E.T."/>
            <person name="Brusic V."/>
            <person name="Quackenbush J."/>
            <person name="Wahlestedt C."/>
            <person name="Mattick J.S."/>
            <person name="Hume D.A."/>
            <person name="Kai C."/>
            <person name="Sasaki D."/>
            <person name="Tomaru Y."/>
            <person name="Fukuda S."/>
            <person name="Kanamori-Katayama M."/>
            <person name="Suzuki M."/>
            <person name="Aoki J."/>
            <person name="Arakawa T."/>
            <person name="Iida J."/>
            <person name="Imamura K."/>
            <person name="Itoh M."/>
            <person name="Kato T."/>
            <person name="Kawaji H."/>
            <person name="Kawagashira N."/>
            <person name="Kawashima T."/>
            <person name="Kojima M."/>
            <person name="Kondo S."/>
            <person name="Konno H."/>
            <person name="Nakano K."/>
            <person name="Ninomiya N."/>
            <person name="Nishio T."/>
            <person name="Okada M."/>
            <person name="Plessy C."/>
            <person name="Shibata K."/>
            <person name="Shiraki T."/>
            <person name="Suzuki S."/>
            <person name="Tagami M."/>
            <person name="Waki K."/>
            <person name="Watahiki A."/>
            <person name="Okamura-Oho Y."/>
            <person name="Suzuki H."/>
            <person name="Kawai J."/>
            <person name="Hayashizaki Y."/>
        </authorList>
    </citation>
    <scope>NUCLEOTIDE SEQUENCE [LARGE SCALE MRNA]</scope>
    <source>
        <strain>C57BL/6J</strain>
        <tissue>Retina</tissue>
    </source>
</reference>
<reference key="3">
    <citation type="submission" date="2005-07" db="EMBL/GenBank/DDBJ databases">
        <authorList>
            <person name="Mural R.J."/>
            <person name="Adams M.D."/>
            <person name="Myers E.W."/>
            <person name="Smith H.O."/>
            <person name="Venter J.C."/>
        </authorList>
    </citation>
    <scope>NUCLEOTIDE SEQUENCE [LARGE SCALE GENOMIC DNA]</scope>
</reference>
<reference key="4">
    <citation type="journal article" date="2004" name="Genome Res.">
        <title>The status, quality, and expansion of the NIH full-length cDNA project: the Mammalian Gene Collection (MGC).</title>
        <authorList>
            <consortium name="The MGC Project Team"/>
        </authorList>
    </citation>
    <scope>NUCLEOTIDE SEQUENCE [LARGE SCALE MRNA]</scope>
    <source>
        <tissue>Eye</tissue>
    </source>
</reference>
<reference key="5">
    <citation type="journal article" date="2003" name="J. Neurosci.">
        <title>Subunit composition of functional nicotinic receptors in dopaminergic neurons investigated with knock-out mice.</title>
        <authorList>
            <person name="Champtiaux N."/>
            <person name="Gotti C."/>
            <person name="Cordero-Erausquin M."/>
            <person name="David D.J."/>
            <person name="Przybylski C."/>
            <person name="Lena C."/>
            <person name="Clementi F."/>
            <person name="Moretti M."/>
            <person name="Rossi F.M."/>
            <person name="Le Novere N."/>
            <person name="McIntosh J.M."/>
            <person name="Gardier A.M."/>
            <person name="Changeux J.P."/>
        </authorList>
    </citation>
    <scope>FUNCTION</scope>
    <scope>SUBUNIT</scope>
    <scope>SUBCELLULAR LOCATION</scope>
    <scope>ACTIVITY REGULATION</scope>
</reference>
<reference key="6">
    <citation type="journal article" date="2011" name="J. Neurosci.">
        <title>Functional nicotinic acetylcholine receptors containing alpha6 subunits are on GABAergic neuronal boutons adherent to ventral tegmental area dopamine neurons.</title>
        <authorList>
            <person name="Yang K."/>
            <person name="Buhlman L."/>
            <person name="Khan G.M."/>
            <person name="Nichols R.A."/>
            <person name="Jin G."/>
            <person name="McIntosh J.M."/>
            <person name="Whiteaker P."/>
            <person name="Lukas R.J."/>
            <person name="Wu J."/>
        </authorList>
    </citation>
    <scope>FUNCTION</scope>
    <scope>ACTIVITY REGULATION</scope>
    <scope>SUBCELLULAR LOCATION</scope>
    <scope>TISSUE SPECIFICITY</scope>
</reference>
<reference key="7">
    <citation type="journal article" date="2012" name="J. Neurosci.">
        <title>alpha6* nicotinic acetylcholine receptor expression and function in a visual salience circuit.</title>
        <authorList>
            <person name="Mackey E.D."/>
            <person name="Engle S.E."/>
            <person name="Kim M.R."/>
            <person name="O'Neill H.C."/>
            <person name="Wageman C.R."/>
            <person name="Patzlaff N.E."/>
            <person name="Wang Y."/>
            <person name="Grady S.R."/>
            <person name="McIntosh J.M."/>
            <person name="Marks M.J."/>
            <person name="Lester H.A."/>
            <person name="Drenan R.M."/>
        </authorList>
    </citation>
    <scope>FUNCTION</scope>
    <scope>TISSUE SPECIFICITY</scope>
    <scope>SUBCELLULAR LOCATION</scope>
</reference>
<reference key="8">
    <citation type="journal article" date="2014" name="J. Neurochem.">
        <title>Enhanced synthesis and release of dopamine in transgenic mice with gain-of-function alpha6* nAChRs.</title>
        <authorList>
            <person name="Wang Y."/>
            <person name="Lee J.W."/>
            <person name="Oh G."/>
            <person name="Grady S.R."/>
            <person name="McIntosh J.M."/>
            <person name="Brunzell D.H."/>
            <person name="Cannon J.R."/>
            <person name="Drenan R.M."/>
        </authorList>
    </citation>
    <scope>FUNCTION</scope>
    <scope>ACTIVITY REGULATION</scope>
    <scope>MUTAGENESIS OF LEU-280</scope>
</reference>
<feature type="signal peptide" evidence="1">
    <location>
        <begin position="1"/>
        <end position="30"/>
    </location>
</feature>
<feature type="chain" id="PRO_0000000361" description="Neuronal acetylcholine receptor subunit alpha-6">
    <location>
        <begin position="31"/>
        <end position="494"/>
    </location>
</feature>
<feature type="topological domain" description="Extracellular" evidence="6">
    <location>
        <begin position="31"/>
        <end position="240"/>
    </location>
</feature>
<feature type="transmembrane region" description="Helical" evidence="6">
    <location>
        <begin position="241"/>
        <end position="265"/>
    </location>
</feature>
<feature type="transmembrane region" description="Helical" evidence="6">
    <location>
        <begin position="272"/>
        <end position="290"/>
    </location>
</feature>
<feature type="transmembrane region" description="Helical" evidence="6">
    <location>
        <begin position="306"/>
        <end position="327"/>
    </location>
</feature>
<feature type="topological domain" description="Cytoplasmic" evidence="6">
    <location>
        <begin position="328"/>
        <end position="465"/>
    </location>
</feature>
<feature type="transmembrane region" description="Helical" evidence="6">
    <location>
        <begin position="466"/>
        <end position="485"/>
    </location>
</feature>
<feature type="region of interest" description="Disordered" evidence="7">
    <location>
        <begin position="399"/>
        <end position="423"/>
    </location>
</feature>
<feature type="modified residue" description="Phosphoserine" evidence="3">
    <location>
        <position position="401"/>
    </location>
</feature>
<feature type="glycosylation site" description="N-linked (GlcNAc...) asparagine" evidence="6">
    <location>
        <position position="54"/>
    </location>
</feature>
<feature type="glycosylation site" description="N-linked (GlcNAc...) asparagine" evidence="6">
    <location>
        <position position="171"/>
    </location>
</feature>
<feature type="disulfide bond" evidence="1">
    <location>
        <begin position="158"/>
        <end position="172"/>
    </location>
</feature>
<feature type="disulfide bond" description="Associated with receptor activation" evidence="1">
    <location>
        <begin position="222"/>
        <end position="223"/>
    </location>
</feature>
<feature type="mutagenesis site" description="Increases sensitivity to agonists such as acetylcholine or nicotine. Alterates dopamine synthesis. Increases locomotor activation in animals with this mutation. Promotes drug reward." evidence="11">
    <original>L</original>
    <variation>S</variation>
    <location>
        <position position="280"/>
    </location>
</feature>
<feature type="sequence conflict" description="In Ref. 1; CAB53472." evidence="12" ref="1">
    <original>F</original>
    <variation>L</variation>
    <location>
        <position position="63"/>
    </location>
</feature>
<feature type="sequence conflict" description="In Ref. 1; CAB53472." evidence="12" ref="1">
    <original>K</original>
    <variation>N</variation>
    <location>
        <position position="493"/>
    </location>
</feature>
<proteinExistence type="evidence at protein level"/>
<dbReference type="EMBL" id="AJ245706">
    <property type="protein sequence ID" value="CAB53472.1"/>
    <property type="molecule type" value="mRNA"/>
</dbReference>
<dbReference type="EMBL" id="AK149262">
    <property type="protein sequence ID" value="BAE28777.1"/>
    <property type="molecule type" value="mRNA"/>
</dbReference>
<dbReference type="EMBL" id="CH466580">
    <property type="protein sequence ID" value="EDL32787.1"/>
    <property type="molecule type" value="Genomic_DNA"/>
</dbReference>
<dbReference type="EMBL" id="BC031985">
    <property type="protein sequence ID" value="AAH31985.1"/>
    <property type="molecule type" value="mRNA"/>
</dbReference>
<dbReference type="CCDS" id="CCDS40312.1"/>
<dbReference type="RefSeq" id="NP_067344.2">
    <property type="nucleotide sequence ID" value="NM_021369.2"/>
</dbReference>
<dbReference type="SMR" id="Q9R0W9"/>
<dbReference type="ComplexPortal" id="CPX-202">
    <property type="entry name" value="Neuronal nicotinic acetylcholine receptor complex, alpha3-alpha6-beta2-beta3"/>
</dbReference>
<dbReference type="ComplexPortal" id="CPX-212">
    <property type="entry name" value="Neuronal nicotinic acetylcholine receptor complex, alpha3-alpha6-beta4"/>
</dbReference>
<dbReference type="FunCoup" id="Q9R0W9">
    <property type="interactions" value="397"/>
</dbReference>
<dbReference type="STRING" id="10090.ENSMUSP00000033882"/>
<dbReference type="ChEMBL" id="CHEMBL6183"/>
<dbReference type="GlyCosmos" id="Q9R0W9">
    <property type="glycosylation" value="2 sites, No reported glycans"/>
</dbReference>
<dbReference type="GlyGen" id="Q9R0W9">
    <property type="glycosylation" value="2 sites, 1 N-linked glycan (1 site)"/>
</dbReference>
<dbReference type="PhosphoSitePlus" id="Q9R0W9"/>
<dbReference type="PaxDb" id="10090-ENSMUSP00000033882"/>
<dbReference type="ProteomicsDB" id="285585"/>
<dbReference type="Antibodypedia" id="24152">
    <property type="antibodies" value="145 antibodies from 26 providers"/>
</dbReference>
<dbReference type="DNASU" id="11440"/>
<dbReference type="Ensembl" id="ENSMUST00000033882.10">
    <property type="protein sequence ID" value="ENSMUSP00000033882.9"/>
    <property type="gene ID" value="ENSMUSG00000031491.11"/>
</dbReference>
<dbReference type="GeneID" id="11440"/>
<dbReference type="KEGG" id="mmu:11440"/>
<dbReference type="UCSC" id="uc009liv.1">
    <property type="organism name" value="mouse"/>
</dbReference>
<dbReference type="AGR" id="MGI:106213"/>
<dbReference type="CTD" id="8973"/>
<dbReference type="MGI" id="MGI:106213">
    <property type="gene designation" value="Chrna6"/>
</dbReference>
<dbReference type="VEuPathDB" id="HostDB:ENSMUSG00000031491"/>
<dbReference type="eggNOG" id="KOG3645">
    <property type="taxonomic scope" value="Eukaryota"/>
</dbReference>
<dbReference type="GeneTree" id="ENSGT00940000158062"/>
<dbReference type="HOGENOM" id="CLU_018074_1_0_1"/>
<dbReference type="InParanoid" id="Q9R0W9"/>
<dbReference type="OMA" id="HKDTKLH"/>
<dbReference type="OrthoDB" id="5975154at2759"/>
<dbReference type="PhylomeDB" id="Q9R0W9"/>
<dbReference type="TreeFam" id="TF315605"/>
<dbReference type="Reactome" id="R-MMU-629594">
    <property type="pathway name" value="Highly calcium permeable postsynaptic nicotinic acetylcholine receptors"/>
</dbReference>
<dbReference type="Reactome" id="R-MMU-629597">
    <property type="pathway name" value="Highly calcium permeable nicotinic acetylcholine receptors"/>
</dbReference>
<dbReference type="BioGRID-ORCS" id="11440">
    <property type="hits" value="2 hits in 79 CRISPR screens"/>
</dbReference>
<dbReference type="PRO" id="PR:Q9R0W9"/>
<dbReference type="Proteomes" id="UP000000589">
    <property type="component" value="Chromosome 8"/>
</dbReference>
<dbReference type="RNAct" id="Q9R0W9">
    <property type="molecule type" value="protein"/>
</dbReference>
<dbReference type="Bgee" id="ENSMUSG00000031491">
    <property type="expression patterns" value="Expressed in floor plate of diencephalon and 42 other cell types or tissues"/>
</dbReference>
<dbReference type="GO" id="GO:0005892">
    <property type="term" value="C:acetylcholine-gated channel complex"/>
    <property type="evidence" value="ECO:0000314"/>
    <property type="project" value="MGI"/>
</dbReference>
<dbReference type="GO" id="GO:0034703">
    <property type="term" value="C:cation channel complex"/>
    <property type="evidence" value="ECO:0007669"/>
    <property type="project" value="Ensembl"/>
</dbReference>
<dbReference type="GO" id="GO:0098691">
    <property type="term" value="C:dopaminergic synapse"/>
    <property type="evidence" value="ECO:0000314"/>
    <property type="project" value="UniProtKB"/>
</dbReference>
<dbReference type="GO" id="GO:0098878">
    <property type="term" value="C:neurotransmitter receptor complex"/>
    <property type="evidence" value="ECO:0007669"/>
    <property type="project" value="Ensembl"/>
</dbReference>
<dbReference type="GO" id="GO:0045211">
    <property type="term" value="C:postsynaptic membrane"/>
    <property type="evidence" value="ECO:0000314"/>
    <property type="project" value="SynGO"/>
</dbReference>
<dbReference type="GO" id="GO:0042734">
    <property type="term" value="C:presynaptic membrane"/>
    <property type="evidence" value="ECO:0000314"/>
    <property type="project" value="UniProtKB"/>
</dbReference>
<dbReference type="GO" id="GO:0022848">
    <property type="term" value="F:acetylcholine-gated monoatomic cation-selective channel activity"/>
    <property type="evidence" value="ECO:0000315"/>
    <property type="project" value="UniProtKB"/>
</dbReference>
<dbReference type="GO" id="GO:0004888">
    <property type="term" value="F:transmembrane signaling receptor activity"/>
    <property type="evidence" value="ECO:0007669"/>
    <property type="project" value="InterPro"/>
</dbReference>
<dbReference type="GO" id="GO:0035095">
    <property type="term" value="P:behavioral response to nicotine"/>
    <property type="evidence" value="ECO:0000315"/>
    <property type="project" value="UniProtKB"/>
</dbReference>
<dbReference type="GO" id="GO:0051899">
    <property type="term" value="P:membrane depolarization"/>
    <property type="evidence" value="ECO:0000315"/>
    <property type="project" value="MGI"/>
</dbReference>
<dbReference type="GO" id="GO:0099171">
    <property type="term" value="P:presynaptic modulation of chemical synaptic transmission"/>
    <property type="evidence" value="ECO:0000314"/>
    <property type="project" value="SynGO"/>
</dbReference>
<dbReference type="GO" id="GO:0014059">
    <property type="term" value="P:regulation of dopamine secretion"/>
    <property type="evidence" value="ECO:0000315"/>
    <property type="project" value="UniProtKB"/>
</dbReference>
<dbReference type="CDD" id="cd19064">
    <property type="entry name" value="LGIC_TM_nAChR"/>
    <property type="match status" value="1"/>
</dbReference>
<dbReference type="FunFam" id="2.70.170.10:FF:000008">
    <property type="entry name" value="Cholinergic receptor nicotinic alpha 6 subunit"/>
    <property type="match status" value="1"/>
</dbReference>
<dbReference type="FunFam" id="1.20.58.390:FF:000017">
    <property type="entry name" value="Neuronal acetylcholine receptor subunit alpha-3"/>
    <property type="match status" value="1"/>
</dbReference>
<dbReference type="FunFam" id="1.20.58.390:FF:000001">
    <property type="entry name" value="Neuronal nicotinic acetylcholine receptor subunit 3"/>
    <property type="match status" value="1"/>
</dbReference>
<dbReference type="Gene3D" id="2.70.170.10">
    <property type="entry name" value="Neurotransmitter-gated ion-channel ligand-binding domain"/>
    <property type="match status" value="1"/>
</dbReference>
<dbReference type="Gene3D" id="1.20.58.390">
    <property type="entry name" value="Neurotransmitter-gated ion-channel transmembrane domain"/>
    <property type="match status" value="2"/>
</dbReference>
<dbReference type="InterPro" id="IPR006202">
    <property type="entry name" value="Neur_chan_lig-bd"/>
</dbReference>
<dbReference type="InterPro" id="IPR036734">
    <property type="entry name" value="Neur_chan_lig-bd_sf"/>
</dbReference>
<dbReference type="InterPro" id="IPR006201">
    <property type="entry name" value="Neur_channel"/>
</dbReference>
<dbReference type="InterPro" id="IPR036719">
    <property type="entry name" value="Neuro-gated_channel_TM_sf"/>
</dbReference>
<dbReference type="InterPro" id="IPR038050">
    <property type="entry name" value="Neuro_actylchol_rec"/>
</dbReference>
<dbReference type="InterPro" id="IPR006029">
    <property type="entry name" value="Neurotrans-gated_channel_TM"/>
</dbReference>
<dbReference type="InterPro" id="IPR018000">
    <property type="entry name" value="Neurotransmitter_ion_chnl_CS"/>
</dbReference>
<dbReference type="InterPro" id="IPR002394">
    <property type="entry name" value="Nicotinic_acetylcholine_rcpt"/>
</dbReference>
<dbReference type="NCBIfam" id="TIGR00860">
    <property type="entry name" value="LIC"/>
    <property type="match status" value="1"/>
</dbReference>
<dbReference type="PANTHER" id="PTHR18945">
    <property type="entry name" value="NEUROTRANSMITTER GATED ION CHANNEL"/>
    <property type="match status" value="1"/>
</dbReference>
<dbReference type="Pfam" id="PF02931">
    <property type="entry name" value="Neur_chan_LBD"/>
    <property type="match status" value="1"/>
</dbReference>
<dbReference type="Pfam" id="PF02932">
    <property type="entry name" value="Neur_chan_memb"/>
    <property type="match status" value="1"/>
</dbReference>
<dbReference type="PRINTS" id="PR00254">
    <property type="entry name" value="NICOTINICR"/>
</dbReference>
<dbReference type="PRINTS" id="PR00252">
    <property type="entry name" value="NRIONCHANNEL"/>
</dbReference>
<dbReference type="SUPFAM" id="SSF90112">
    <property type="entry name" value="Neurotransmitter-gated ion-channel transmembrane pore"/>
    <property type="match status" value="1"/>
</dbReference>
<dbReference type="SUPFAM" id="SSF63712">
    <property type="entry name" value="Nicotinic receptor ligand binding domain-like"/>
    <property type="match status" value="1"/>
</dbReference>
<dbReference type="PROSITE" id="PS00236">
    <property type="entry name" value="NEUROTR_ION_CHANNEL"/>
    <property type="match status" value="1"/>
</dbReference>
<protein>
    <recommendedName>
        <fullName>Neuronal acetylcholine receptor subunit alpha-6</fullName>
    </recommendedName>
</protein>
<evidence type="ECO:0000250" key="1"/>
<evidence type="ECO:0000250" key="2">
    <source>
        <dbReference type="UniProtKB" id="P02709"/>
    </source>
</evidence>
<evidence type="ECO:0000250" key="3">
    <source>
        <dbReference type="UniProtKB" id="P04757"/>
    </source>
</evidence>
<evidence type="ECO:0000250" key="4">
    <source>
        <dbReference type="UniProtKB" id="P43143"/>
    </source>
</evidence>
<evidence type="ECO:0000250" key="5">
    <source>
        <dbReference type="UniProtKB" id="Q15825"/>
    </source>
</evidence>
<evidence type="ECO:0000255" key="6"/>
<evidence type="ECO:0000256" key="7">
    <source>
        <dbReference type="SAM" id="MobiDB-lite"/>
    </source>
</evidence>
<evidence type="ECO:0000269" key="8">
    <source>
    </source>
</evidence>
<evidence type="ECO:0000269" key="9">
    <source>
    </source>
</evidence>
<evidence type="ECO:0000269" key="10">
    <source>
    </source>
</evidence>
<evidence type="ECO:0000269" key="11">
    <source>
    </source>
</evidence>
<evidence type="ECO:0000305" key="12"/>
<keyword id="KW-1003">Cell membrane</keyword>
<keyword id="KW-1015">Disulfide bond</keyword>
<keyword id="KW-0325">Glycoprotein</keyword>
<keyword id="KW-0407">Ion channel</keyword>
<keyword id="KW-0406">Ion transport</keyword>
<keyword id="KW-1071">Ligand-gated ion channel</keyword>
<keyword id="KW-0472">Membrane</keyword>
<keyword id="KW-0597">Phosphoprotein</keyword>
<keyword id="KW-0675">Receptor</keyword>
<keyword id="KW-1185">Reference proteome</keyword>
<keyword id="KW-0732">Signal</keyword>
<keyword id="KW-0770">Synapse</keyword>
<keyword id="KW-0812">Transmembrane</keyword>
<keyword id="KW-1133">Transmembrane helix</keyword>
<keyword id="KW-0813">Transport</keyword>
<comment type="function">
    <text evidence="8 9 10 11">Component of neuronal acetylcholine receptors (nAChRs) that function as pentameric, ligand-gated cation channels with high calcium permeability among other activities. nAChRs are excitatory neurotrasnmitter receptors formed by a collection of nAChR subunits known to mediate synaptic transmission in the nervous system and the neuromuscular junction. Each nAchR subunit confers differential attributes to channel properties, including activation, deactivation and desensitization kinetics, pH sensitivity, cation permeability, and binding to allosteric modulators (PubMed:12944511, PubMed:21325521, PubMed:22836257, PubMed:24266758). CHRNA6 forms pentameric channels with CHRNB2 and CHRNA4 that exhibit high sensitivity to ACh and nicotine and are predominantly expressed in only a few brain areas, including dopaminergic neurons, norepirephrine neurons and cells of the visual system (PubMed:12944511, PubMed:21325521, PubMed:22836257, PubMed:24266758). nAChrs containing CHRNA6 subunits mediate endogenous cholinergic modulation of dopamine and gamma-aminobutyric acid (GABA) release in response to nicotine at nerve terminals (PubMed:12944511, PubMed:21325521, PubMed:22836257, PubMed:24266758).</text>
</comment>
<comment type="catalytic activity">
    <reaction evidence="2">
        <text>K(+)(in) = K(+)(out)</text>
        <dbReference type="Rhea" id="RHEA:29463"/>
        <dbReference type="ChEBI" id="CHEBI:29103"/>
    </reaction>
</comment>
<comment type="catalytic activity">
    <reaction evidence="2">
        <text>Na(+)(in) = Na(+)(out)</text>
        <dbReference type="Rhea" id="RHEA:34963"/>
        <dbReference type="ChEBI" id="CHEBI:29101"/>
    </reaction>
</comment>
<comment type="catalytic activity">
    <reaction evidence="4">
        <text>Ca(2+)(in) = Ca(2+)(out)</text>
        <dbReference type="Rhea" id="RHEA:29671"/>
        <dbReference type="ChEBI" id="CHEBI:29108"/>
    </reaction>
</comment>
<comment type="activity regulation">
    <text evidence="8 9 11">Activated by a myriad of ligands such as acetylcholine, cytisine and nicotine (PubMed:12944511, PubMed:21325521, PubMed:24266758). CHRNA6 nAChR activity is inhibited by the antagonists alpha-conotoxin MII and PIA, a small disulfide-constrained peptides from cone snails (PubMed:21325521).</text>
</comment>
<comment type="subunit">
    <text evidence="5 8">Neuronal AChR is composed of two different types of subunits: alpha and non-alpha (beta) (PubMed:12944511). CHRNA6/alpha-6 subunit can be combined to CHRNB2/beta-2 and CHRNA4/alpha-4 to give rise to functional receptors (PubMed:12944511). Interacts with LYPD6.</text>
</comment>
<comment type="subcellular location">
    <subcellularLocation>
        <location evidence="8 9 10">Synaptic cell membrane</location>
        <topology evidence="6">Multi-pass membrane protein</topology>
    </subcellularLocation>
</comment>
<comment type="tissue specificity">
    <text evidence="9 10">Predominantly expressed in only a few brain areas, including dopaminergic neurons, norepirephrine neurons and cells of the visual system.</text>
</comment>
<comment type="similarity">
    <text evidence="12">Belongs to the ligand-gated ion channel (TC 1.A.9) family. Acetylcholine receptor (TC 1.A.9.1) subfamily. Alpha-6/CHRNA6 sub-subfamily.</text>
</comment>